<accession>Q0BHC9</accession>
<reference key="1">
    <citation type="submission" date="2006-08" db="EMBL/GenBank/DDBJ databases">
        <title>Complete sequence of chromosome 1 of Burkholderia cepacia AMMD.</title>
        <authorList>
            <person name="Copeland A."/>
            <person name="Lucas S."/>
            <person name="Lapidus A."/>
            <person name="Barry K."/>
            <person name="Detter J.C."/>
            <person name="Glavina del Rio T."/>
            <person name="Hammon N."/>
            <person name="Israni S."/>
            <person name="Pitluck S."/>
            <person name="Bruce D."/>
            <person name="Chain P."/>
            <person name="Malfatti S."/>
            <person name="Shin M."/>
            <person name="Vergez L."/>
            <person name="Schmutz J."/>
            <person name="Larimer F."/>
            <person name="Land M."/>
            <person name="Hauser L."/>
            <person name="Kyrpides N."/>
            <person name="Kim E."/>
            <person name="Parke J."/>
            <person name="Coenye T."/>
            <person name="Konstantinidis K."/>
            <person name="Ramette A."/>
            <person name="Tiedje J."/>
            <person name="Richardson P."/>
        </authorList>
    </citation>
    <scope>NUCLEOTIDE SEQUENCE [LARGE SCALE GENOMIC DNA]</scope>
    <source>
        <strain>ATCC BAA-244 / DSM 16087 / CCUG 44356 / LMG 19182 / AMMD</strain>
    </source>
</reference>
<organism>
    <name type="scientific">Burkholderia ambifaria (strain ATCC BAA-244 / DSM 16087 / CCUG 44356 / LMG 19182 / AMMD)</name>
    <name type="common">Burkholderia cepacia (strain AMMD)</name>
    <dbReference type="NCBI Taxonomy" id="339670"/>
    <lineage>
        <taxon>Bacteria</taxon>
        <taxon>Pseudomonadati</taxon>
        <taxon>Pseudomonadota</taxon>
        <taxon>Betaproteobacteria</taxon>
        <taxon>Burkholderiales</taxon>
        <taxon>Burkholderiaceae</taxon>
        <taxon>Burkholderia</taxon>
        <taxon>Burkholderia cepacia complex</taxon>
    </lineage>
</organism>
<dbReference type="EMBL" id="CP000440">
    <property type="protein sequence ID" value="ABI86444.1"/>
    <property type="molecule type" value="Genomic_DNA"/>
</dbReference>
<dbReference type="RefSeq" id="WP_011656245.1">
    <property type="nucleotide sequence ID" value="NZ_CP009798.1"/>
</dbReference>
<dbReference type="SMR" id="Q0BHC9"/>
<dbReference type="KEGG" id="bam:Bamb_0885"/>
<dbReference type="PATRIC" id="fig|339670.21.peg.697"/>
<dbReference type="eggNOG" id="COG1495">
    <property type="taxonomic scope" value="Bacteria"/>
</dbReference>
<dbReference type="Proteomes" id="UP000000662">
    <property type="component" value="Chromosome 1"/>
</dbReference>
<dbReference type="GO" id="GO:0005886">
    <property type="term" value="C:plasma membrane"/>
    <property type="evidence" value="ECO:0007669"/>
    <property type="project" value="UniProtKB-SubCell"/>
</dbReference>
<dbReference type="GO" id="GO:0009055">
    <property type="term" value="F:electron transfer activity"/>
    <property type="evidence" value="ECO:0007669"/>
    <property type="project" value="UniProtKB-UniRule"/>
</dbReference>
<dbReference type="GO" id="GO:0015035">
    <property type="term" value="F:protein-disulfide reductase activity"/>
    <property type="evidence" value="ECO:0007669"/>
    <property type="project" value="UniProtKB-UniRule"/>
</dbReference>
<dbReference type="GO" id="GO:0006457">
    <property type="term" value="P:protein folding"/>
    <property type="evidence" value="ECO:0007669"/>
    <property type="project" value="InterPro"/>
</dbReference>
<dbReference type="Gene3D" id="1.20.1550.10">
    <property type="entry name" value="DsbB-like"/>
    <property type="match status" value="1"/>
</dbReference>
<dbReference type="HAMAP" id="MF_00286">
    <property type="entry name" value="DsbB"/>
    <property type="match status" value="1"/>
</dbReference>
<dbReference type="InterPro" id="IPR003752">
    <property type="entry name" value="DiS_bond_form_DsbB/BdbC"/>
</dbReference>
<dbReference type="InterPro" id="IPR022920">
    <property type="entry name" value="Disulphide_bond_form_DsbB"/>
</dbReference>
<dbReference type="InterPro" id="IPR050183">
    <property type="entry name" value="DsbB"/>
</dbReference>
<dbReference type="InterPro" id="IPR023380">
    <property type="entry name" value="DsbB-like_sf"/>
</dbReference>
<dbReference type="NCBIfam" id="NF002552">
    <property type="entry name" value="PRK02110.1"/>
    <property type="match status" value="1"/>
</dbReference>
<dbReference type="PANTHER" id="PTHR36570">
    <property type="entry name" value="DISULFIDE BOND FORMATION PROTEIN B"/>
    <property type="match status" value="1"/>
</dbReference>
<dbReference type="PANTHER" id="PTHR36570:SF3">
    <property type="entry name" value="DISULFIDE BOND FORMATION PROTEIN B"/>
    <property type="match status" value="1"/>
</dbReference>
<dbReference type="Pfam" id="PF02600">
    <property type="entry name" value="DsbB"/>
    <property type="match status" value="1"/>
</dbReference>
<dbReference type="SUPFAM" id="SSF158442">
    <property type="entry name" value="DsbB-like"/>
    <property type="match status" value="1"/>
</dbReference>
<gene>
    <name evidence="1" type="primary">dsbB</name>
    <name type="ordered locus">Bamb_0885</name>
</gene>
<sequence>MNDSTLALRRERRLLMLLGWVCIALLAGALYLQYVKNEDPCPLCIIQRYFFAAIGIFAFLAAGIRNWRVIWVFELLIAIAAAGGVGTAARHLSIQMNPGFSCGFDTLQPIVDSLPPAQWFPGMFKVAGLCETVYPPIFGILLPGWALIGFAVILVAVASSLWRHRRKLAG</sequence>
<evidence type="ECO:0000255" key="1">
    <source>
        <dbReference type="HAMAP-Rule" id="MF_00286"/>
    </source>
</evidence>
<name>DSBB_BURCM</name>
<feature type="chain" id="PRO_0000298344" description="Disulfide bond formation protein B">
    <location>
        <begin position="1"/>
        <end position="170"/>
    </location>
</feature>
<feature type="topological domain" description="Cytoplasmic" evidence="1">
    <location>
        <begin position="1"/>
        <end position="14"/>
    </location>
</feature>
<feature type="transmembrane region" description="Helical" evidence="1">
    <location>
        <begin position="15"/>
        <end position="31"/>
    </location>
</feature>
<feature type="topological domain" description="Periplasmic" evidence="1">
    <location>
        <begin position="32"/>
        <end position="49"/>
    </location>
</feature>
<feature type="transmembrane region" description="Helical" evidence="1">
    <location>
        <begin position="50"/>
        <end position="64"/>
    </location>
</feature>
<feature type="topological domain" description="Cytoplasmic" evidence="1">
    <location>
        <begin position="65"/>
        <end position="71"/>
    </location>
</feature>
<feature type="transmembrane region" description="Helical" evidence="1">
    <location>
        <begin position="72"/>
        <end position="89"/>
    </location>
</feature>
<feature type="topological domain" description="Periplasmic" evidence="1">
    <location>
        <begin position="90"/>
        <end position="144"/>
    </location>
</feature>
<feature type="transmembrane region" description="Helical" evidence="1">
    <location>
        <begin position="145"/>
        <end position="163"/>
    </location>
</feature>
<feature type="topological domain" description="Cytoplasmic" evidence="1">
    <location>
        <begin position="164"/>
        <end position="170"/>
    </location>
</feature>
<feature type="disulfide bond" description="Redox-active" evidence="1">
    <location>
        <begin position="41"/>
        <end position="44"/>
    </location>
</feature>
<feature type="disulfide bond" description="Redox-active" evidence="1">
    <location>
        <begin position="102"/>
        <end position="130"/>
    </location>
</feature>
<protein>
    <recommendedName>
        <fullName evidence="1">Disulfide bond formation protein B</fullName>
    </recommendedName>
    <alternativeName>
        <fullName evidence="1">Disulfide oxidoreductase</fullName>
    </alternativeName>
</protein>
<comment type="function">
    <text evidence="1">Required for disulfide bond formation in some periplasmic proteins. Acts by oxidizing the DsbA protein.</text>
</comment>
<comment type="subcellular location">
    <subcellularLocation>
        <location evidence="1">Cell inner membrane</location>
        <topology evidence="1">Multi-pass membrane protein</topology>
    </subcellularLocation>
</comment>
<comment type="similarity">
    <text evidence="1">Belongs to the DsbB family.</text>
</comment>
<proteinExistence type="inferred from homology"/>
<keyword id="KW-0997">Cell inner membrane</keyword>
<keyword id="KW-1003">Cell membrane</keyword>
<keyword id="KW-0143">Chaperone</keyword>
<keyword id="KW-1015">Disulfide bond</keyword>
<keyword id="KW-0249">Electron transport</keyword>
<keyword id="KW-0472">Membrane</keyword>
<keyword id="KW-0560">Oxidoreductase</keyword>
<keyword id="KW-0676">Redox-active center</keyword>
<keyword id="KW-0812">Transmembrane</keyword>
<keyword id="KW-1133">Transmembrane helix</keyword>
<keyword id="KW-0813">Transport</keyword>